<sequence>VATVDCSGYPKPACTMEYMPLCGSDNKTYGNKCNFCNAVVDSNGTLTLSHFGEC</sequence>
<organism>
    <name type="scientific">Sarkidiornis melanotos</name>
    <name type="common">African comb duck</name>
    <name type="synonym">Anser melanotos</name>
    <dbReference type="NCBI Taxonomy" id="8887"/>
    <lineage>
        <taxon>Eukaryota</taxon>
        <taxon>Metazoa</taxon>
        <taxon>Chordata</taxon>
        <taxon>Craniata</taxon>
        <taxon>Vertebrata</taxon>
        <taxon>Euteleostomi</taxon>
        <taxon>Archelosauria</taxon>
        <taxon>Archosauria</taxon>
        <taxon>Dinosauria</taxon>
        <taxon>Saurischia</taxon>
        <taxon>Theropoda</taxon>
        <taxon>Coelurosauria</taxon>
        <taxon>Aves</taxon>
        <taxon>Neognathae</taxon>
        <taxon>Galloanserae</taxon>
        <taxon>Anseriformes</taxon>
        <taxon>Anatidae</taxon>
        <taxon>Tadorninae</taxon>
        <taxon>Sarkidiornis</taxon>
    </lineage>
</organism>
<comment type="subcellular location">
    <subcellularLocation>
        <location>Secreted</location>
    </subcellularLocation>
</comment>
<comment type="domain">
    <text>Avian ovomucoid consists of three homologous, tandem Kazal family inhibitory domains.</text>
</comment>
<feature type="chain" id="PRO_0000073176" description="Ovomucoid">
    <location>
        <begin position="1" status="less than"/>
        <end position="54" status="greater than"/>
    </location>
</feature>
<feature type="domain" description="Kazal-like" evidence="1">
    <location>
        <begin position="4"/>
        <end position="54"/>
    </location>
</feature>
<feature type="site" description="Reactive bond 3">
    <location>
        <begin position="16"/>
        <end position="17"/>
    </location>
</feature>
<feature type="glycosylation site" description="N-linked (GlcNAc...) asparagine">
    <location>
        <position position="43"/>
    </location>
</feature>
<feature type="disulfide bond">
    <location>
        <begin position="6"/>
        <end position="36"/>
    </location>
</feature>
<feature type="disulfide bond">
    <location>
        <begin position="14"/>
        <end position="33"/>
    </location>
</feature>
<feature type="disulfide bond">
    <location>
        <begin position="22"/>
        <end position="54"/>
    </location>
</feature>
<feature type="non-terminal residue">
    <location>
        <position position="1"/>
    </location>
</feature>
<feature type="non-terminal residue">
    <location>
        <position position="54"/>
    </location>
</feature>
<reference key="1">
    <citation type="journal article" date="1990" name="J. Protein Chem.">
        <title>Amino acid sequences of ovomucoid third domain from 25 additional species of birds.</title>
        <authorList>
            <person name="Laskowski M. Jr."/>
            <person name="Apostol I."/>
            <person name="Ardelt W."/>
            <person name="Cook J."/>
            <person name="Giletto A."/>
            <person name="Kelly C.A."/>
            <person name="Lu W."/>
            <person name="Park S.J."/>
            <person name="Qasim M.A."/>
            <person name="Whatley H.E."/>
            <person name="Wieczorek A."/>
            <person name="Wynn R."/>
        </authorList>
    </citation>
    <scope>PROTEIN SEQUENCE</scope>
</reference>
<evidence type="ECO:0000255" key="1">
    <source>
        <dbReference type="PROSITE-ProRule" id="PRU00798"/>
    </source>
</evidence>
<protein>
    <recommendedName>
        <fullName>Ovomucoid</fullName>
    </recommendedName>
</protein>
<keyword id="KW-0903">Direct protein sequencing</keyword>
<keyword id="KW-1015">Disulfide bond</keyword>
<keyword id="KW-0325">Glycoprotein</keyword>
<keyword id="KW-0646">Protease inhibitor</keyword>
<keyword id="KW-0677">Repeat</keyword>
<keyword id="KW-0964">Secreted</keyword>
<keyword id="KW-0722">Serine protease inhibitor</keyword>
<proteinExistence type="evidence at protein level"/>
<name>IOVO_SARME</name>
<accession>P68156</accession>
<accession>P05576</accession>
<dbReference type="PIR" id="E61492">
    <property type="entry name" value="E61492"/>
</dbReference>
<dbReference type="SMR" id="P68156"/>
<dbReference type="GO" id="GO:0005576">
    <property type="term" value="C:extracellular region"/>
    <property type="evidence" value="ECO:0007669"/>
    <property type="project" value="UniProtKB-SubCell"/>
</dbReference>
<dbReference type="GO" id="GO:0004867">
    <property type="term" value="F:serine-type endopeptidase inhibitor activity"/>
    <property type="evidence" value="ECO:0007669"/>
    <property type="project" value="UniProtKB-KW"/>
</dbReference>
<dbReference type="CDD" id="cd00104">
    <property type="entry name" value="KAZAL_FS"/>
    <property type="match status" value="1"/>
</dbReference>
<dbReference type="FunFam" id="3.30.60.30:FF:000037">
    <property type="entry name" value="Ovomucoid"/>
    <property type="match status" value="1"/>
</dbReference>
<dbReference type="Gene3D" id="3.30.60.30">
    <property type="match status" value="1"/>
</dbReference>
<dbReference type="InterPro" id="IPR051597">
    <property type="entry name" value="Bifunctional_prot_inhibitor"/>
</dbReference>
<dbReference type="InterPro" id="IPR002350">
    <property type="entry name" value="Kazal_dom"/>
</dbReference>
<dbReference type="InterPro" id="IPR036058">
    <property type="entry name" value="Kazal_dom_sf"/>
</dbReference>
<dbReference type="InterPro" id="IPR001239">
    <property type="entry name" value="Prot_inh_Kazal-m"/>
</dbReference>
<dbReference type="PANTHER" id="PTHR47729:SF1">
    <property type="entry name" value="OVOMUCOID-LIKE-RELATED"/>
    <property type="match status" value="1"/>
</dbReference>
<dbReference type="PANTHER" id="PTHR47729">
    <property type="entry name" value="SERINE PEPTIDASE INHIBITOR, KAZAL TYPE 2, TANDEM DUPLICATE 1-RELATED"/>
    <property type="match status" value="1"/>
</dbReference>
<dbReference type="Pfam" id="PF00050">
    <property type="entry name" value="Kazal_1"/>
    <property type="match status" value="1"/>
</dbReference>
<dbReference type="PRINTS" id="PR00290">
    <property type="entry name" value="KAZALINHBTR"/>
</dbReference>
<dbReference type="SMART" id="SM00280">
    <property type="entry name" value="KAZAL"/>
    <property type="match status" value="1"/>
</dbReference>
<dbReference type="SUPFAM" id="SSF100895">
    <property type="entry name" value="Kazal-type serine protease inhibitors"/>
    <property type="match status" value="1"/>
</dbReference>
<dbReference type="PROSITE" id="PS00282">
    <property type="entry name" value="KAZAL_1"/>
    <property type="match status" value="1"/>
</dbReference>
<dbReference type="PROSITE" id="PS51465">
    <property type="entry name" value="KAZAL_2"/>
    <property type="match status" value="1"/>
</dbReference>